<protein>
    <recommendedName>
        <fullName>Histone-lysine N-methyltransferase SUV39H1</fullName>
        <ecNumber evidence="9">2.1.1.355</ecNumber>
    </recommendedName>
    <alternativeName>
        <fullName>Histone H3-K9 methyltransferase 1</fullName>
        <shortName>H3-K9-HMTase 1</shortName>
    </alternativeName>
    <alternativeName>
        <fullName>Position-effect variegation 3-9 homolog</fullName>
    </alternativeName>
    <alternativeName>
        <fullName>Suppressor of variegation 3-9 homolog 1</fullName>
        <shortName>Su(var)3-9 homolog 1</shortName>
    </alternativeName>
</protein>
<gene>
    <name type="primary">Suv39h1</name>
    <name type="synonym">Suv39h</name>
</gene>
<evidence type="ECO:0000250" key="1"/>
<evidence type="ECO:0000250" key="2">
    <source>
        <dbReference type="UniProtKB" id="O43463"/>
    </source>
</evidence>
<evidence type="ECO:0000255" key="3">
    <source>
        <dbReference type="PROSITE-ProRule" id="PRU00053"/>
    </source>
</evidence>
<evidence type="ECO:0000255" key="4">
    <source>
        <dbReference type="PROSITE-ProRule" id="PRU00155"/>
    </source>
</evidence>
<evidence type="ECO:0000255" key="5">
    <source>
        <dbReference type="PROSITE-ProRule" id="PRU00157"/>
    </source>
</evidence>
<evidence type="ECO:0000255" key="6">
    <source>
        <dbReference type="PROSITE-ProRule" id="PRU00190"/>
    </source>
</evidence>
<evidence type="ECO:0000255" key="7">
    <source>
        <dbReference type="PROSITE-ProRule" id="PRU00912"/>
    </source>
</evidence>
<evidence type="ECO:0000269" key="8">
    <source>
    </source>
</evidence>
<evidence type="ECO:0000269" key="9">
    <source>
    </source>
</evidence>
<evidence type="ECO:0000269" key="10">
    <source>
    </source>
</evidence>
<evidence type="ECO:0000269" key="11">
    <source>
    </source>
</evidence>
<evidence type="ECO:0000269" key="12">
    <source>
    </source>
</evidence>
<evidence type="ECO:0000269" key="13">
    <source>
    </source>
</evidence>
<evidence type="ECO:0000269" key="14">
    <source>
    </source>
</evidence>
<evidence type="ECO:0000269" key="15">
    <source>
    </source>
</evidence>
<evidence type="ECO:0000269" key="16">
    <source>
    </source>
</evidence>
<evidence type="ECO:0000269" key="17">
    <source>
    </source>
</evidence>
<evidence type="ECO:0000269" key="18">
    <source>
    </source>
</evidence>
<evidence type="ECO:0000269" key="19">
    <source>
    </source>
</evidence>
<evidence type="ECO:0000269" key="20">
    <source>
    </source>
</evidence>
<evidence type="ECO:0000269" key="21">
    <source>
    </source>
</evidence>
<evidence type="ECO:0000303" key="22">
    <source>
    </source>
</evidence>
<evidence type="ECO:0000305" key="23"/>
<evidence type="ECO:0007744" key="24">
    <source>
    </source>
</evidence>
<evidence type="ECO:0007744" key="25">
    <source>
    </source>
</evidence>
<dbReference type="EC" id="2.1.1.355" evidence="9"/>
<dbReference type="EMBL" id="AF019969">
    <property type="protein sequence ID" value="AAB92225.1"/>
    <property type="molecule type" value="mRNA"/>
</dbReference>
<dbReference type="EMBL" id="AF193861">
    <property type="protein sequence ID" value="AAF60969.1"/>
    <property type="molecule type" value="mRNA"/>
</dbReference>
<dbReference type="EMBL" id="AF193862">
    <property type="protein sequence ID" value="AAF60970.1"/>
    <property type="status" value="ALT_FRAME"/>
    <property type="molecule type" value="mRNA"/>
</dbReference>
<dbReference type="EMBL" id="AK088405">
    <property type="protein sequence ID" value="BAC40334.1"/>
    <property type="molecule type" value="mRNA"/>
</dbReference>
<dbReference type="EMBL" id="AK139757">
    <property type="protein sequence ID" value="BAE24129.1"/>
    <property type="molecule type" value="mRNA"/>
</dbReference>
<dbReference type="EMBL" id="AK169389">
    <property type="protein sequence ID" value="BAE41136.1"/>
    <property type="molecule type" value="mRNA"/>
</dbReference>
<dbReference type="EMBL" id="AL663032">
    <property type="status" value="NOT_ANNOTATED_CDS"/>
    <property type="molecule type" value="Genomic_DNA"/>
</dbReference>
<dbReference type="EMBL" id="BC023860">
    <property type="protein sequence ID" value="AAH23860.1"/>
    <property type="molecule type" value="mRNA"/>
</dbReference>
<dbReference type="EMBL" id="AF149203">
    <property type="protein sequence ID" value="AAF73151.1"/>
    <property type="molecule type" value="Genomic_DNA"/>
</dbReference>
<dbReference type="CCDS" id="CCDS40846.1">
    <molecule id="O54864-1"/>
</dbReference>
<dbReference type="RefSeq" id="NP_001277645.1">
    <property type="nucleotide sequence ID" value="NM_001290716.1"/>
</dbReference>
<dbReference type="RefSeq" id="NP_035644.1">
    <molecule id="O54864-1"/>
    <property type="nucleotide sequence ID" value="NM_011514.3"/>
</dbReference>
<dbReference type="SMR" id="O54864"/>
<dbReference type="BioGRID" id="203586">
    <property type="interactions" value="8"/>
</dbReference>
<dbReference type="ComplexPortal" id="CPX-468">
    <property type="entry name" value="eNoSc complex"/>
</dbReference>
<dbReference type="CORUM" id="O54864"/>
<dbReference type="DIP" id="DIP-32590N"/>
<dbReference type="FunCoup" id="O54864">
    <property type="interactions" value="1804"/>
</dbReference>
<dbReference type="IntAct" id="O54864">
    <property type="interactions" value="7"/>
</dbReference>
<dbReference type="MINT" id="O54864"/>
<dbReference type="STRING" id="10090.ENSMUSP00000111300"/>
<dbReference type="iPTMnet" id="O54864"/>
<dbReference type="PhosphoSitePlus" id="O54864"/>
<dbReference type="jPOST" id="O54864"/>
<dbReference type="PaxDb" id="10090-ENSMUSP00000111301"/>
<dbReference type="PeptideAtlas" id="O54864"/>
<dbReference type="ProteomicsDB" id="258671">
    <molecule id="O54864-1"/>
</dbReference>
<dbReference type="ProteomicsDB" id="258672">
    <molecule id="O54864-2"/>
</dbReference>
<dbReference type="ProteomicsDB" id="258673">
    <molecule id="O54864-3"/>
</dbReference>
<dbReference type="Pumba" id="O54864"/>
<dbReference type="Antibodypedia" id="11710">
    <property type="antibodies" value="406 antibodies from 39 providers"/>
</dbReference>
<dbReference type="DNASU" id="20937"/>
<dbReference type="Ensembl" id="ENSMUST00000115636.4">
    <molecule id="O54864-3"/>
    <property type="protein sequence ID" value="ENSMUSP00000111299.4"/>
    <property type="gene ID" value="ENSMUSG00000039231.19"/>
</dbReference>
<dbReference type="Ensembl" id="ENSMUST00000115638.10">
    <molecule id="O54864-1"/>
    <property type="protein sequence ID" value="ENSMUSP00000111301.4"/>
    <property type="gene ID" value="ENSMUSG00000039231.19"/>
</dbReference>
<dbReference type="GeneID" id="20937"/>
<dbReference type="KEGG" id="mmu:20937"/>
<dbReference type="UCSC" id="uc009snq.2">
    <molecule id="O54864-1"/>
    <property type="organism name" value="mouse"/>
</dbReference>
<dbReference type="AGR" id="MGI:1099440"/>
<dbReference type="CTD" id="6839"/>
<dbReference type="MGI" id="MGI:1099440">
    <property type="gene designation" value="Suv39h1"/>
</dbReference>
<dbReference type="VEuPathDB" id="HostDB:ENSMUSG00000039231"/>
<dbReference type="eggNOG" id="KOG1082">
    <property type="taxonomic scope" value="Eukaryota"/>
</dbReference>
<dbReference type="GeneTree" id="ENSGT00940000160063"/>
<dbReference type="HOGENOM" id="CLU_020840_8_0_1"/>
<dbReference type="InParanoid" id="O54864"/>
<dbReference type="OMA" id="HHGNISH"/>
<dbReference type="OrthoDB" id="308383at2759"/>
<dbReference type="TreeFam" id="TF106452"/>
<dbReference type="BRENDA" id="2.1.1.355">
    <property type="organism ID" value="3474"/>
</dbReference>
<dbReference type="Reactome" id="R-MMU-3214841">
    <property type="pathway name" value="PKMTs methylate histone lysines"/>
</dbReference>
<dbReference type="BioGRID-ORCS" id="20937">
    <property type="hits" value="4 hits in 82 CRISPR screens"/>
</dbReference>
<dbReference type="ChiTaRS" id="Suv39h1">
    <property type="organism name" value="mouse"/>
</dbReference>
<dbReference type="PRO" id="PR:O54864"/>
<dbReference type="Proteomes" id="UP000000589">
    <property type="component" value="Chromosome X"/>
</dbReference>
<dbReference type="RNAct" id="O54864">
    <property type="molecule type" value="protein"/>
</dbReference>
<dbReference type="Bgee" id="ENSMUSG00000039231">
    <property type="expression patterns" value="Expressed in floor plate of midbrain and 259 other cell types or tissues"/>
</dbReference>
<dbReference type="ExpressionAtlas" id="O54864">
    <property type="expression patterns" value="baseline and differential"/>
</dbReference>
<dbReference type="GO" id="GO:0005677">
    <property type="term" value="C:chromatin silencing complex"/>
    <property type="evidence" value="ECO:0000314"/>
    <property type="project" value="UniProtKB"/>
</dbReference>
<dbReference type="GO" id="GO:0000775">
    <property type="term" value="C:chromosome, centromeric region"/>
    <property type="evidence" value="ECO:0007669"/>
    <property type="project" value="UniProtKB-SubCell"/>
</dbReference>
<dbReference type="GO" id="GO:0061773">
    <property type="term" value="C:eNoSc complex"/>
    <property type="evidence" value="ECO:0000266"/>
    <property type="project" value="ComplexPortal"/>
</dbReference>
<dbReference type="GO" id="GO:0000792">
    <property type="term" value="C:heterochromatin"/>
    <property type="evidence" value="ECO:0000314"/>
    <property type="project" value="UniProtKB"/>
</dbReference>
<dbReference type="GO" id="GO:0005652">
    <property type="term" value="C:nuclear lamina"/>
    <property type="evidence" value="ECO:0007669"/>
    <property type="project" value="UniProtKB-SubCell"/>
</dbReference>
<dbReference type="GO" id="GO:0005730">
    <property type="term" value="C:nucleolus"/>
    <property type="evidence" value="ECO:0000266"/>
    <property type="project" value="ComplexPortal"/>
</dbReference>
<dbReference type="GO" id="GO:0005654">
    <property type="term" value="C:nucleoplasm"/>
    <property type="evidence" value="ECO:0007669"/>
    <property type="project" value="UniProtKB-SubCell"/>
</dbReference>
<dbReference type="GO" id="GO:0005634">
    <property type="term" value="C:nucleus"/>
    <property type="evidence" value="ECO:0000314"/>
    <property type="project" value="UniProtKB"/>
</dbReference>
<dbReference type="GO" id="GO:0033553">
    <property type="term" value="C:rDNA heterochromatin"/>
    <property type="evidence" value="ECO:0007669"/>
    <property type="project" value="Ensembl"/>
</dbReference>
<dbReference type="GO" id="GO:0046974">
    <property type="term" value="F:histone H3K9 methyltransferase activity"/>
    <property type="evidence" value="ECO:0000314"/>
    <property type="project" value="UniProtKB"/>
</dbReference>
<dbReference type="GO" id="GO:0140949">
    <property type="term" value="F:histone H3K9 trimethyltransferase activity"/>
    <property type="evidence" value="ECO:0007669"/>
    <property type="project" value="UniProtKB-EC"/>
</dbReference>
<dbReference type="GO" id="GO:0140947">
    <property type="term" value="F:histone H3K9me2 methyltransferase activity"/>
    <property type="evidence" value="ECO:0000316"/>
    <property type="project" value="MGI"/>
</dbReference>
<dbReference type="GO" id="GO:0008276">
    <property type="term" value="F:protein methyltransferase activity"/>
    <property type="evidence" value="ECO:0000304"/>
    <property type="project" value="MGI"/>
</dbReference>
<dbReference type="GO" id="GO:0000977">
    <property type="term" value="F:RNA polymerase II transcription regulatory region sequence-specific DNA binding"/>
    <property type="evidence" value="ECO:0000314"/>
    <property type="project" value="MGI"/>
</dbReference>
<dbReference type="GO" id="GO:0000976">
    <property type="term" value="F:transcription cis-regulatory region binding"/>
    <property type="evidence" value="ECO:0000314"/>
    <property type="project" value="UniProtKB"/>
</dbReference>
<dbReference type="GO" id="GO:0008270">
    <property type="term" value="F:zinc ion binding"/>
    <property type="evidence" value="ECO:0007669"/>
    <property type="project" value="InterPro"/>
</dbReference>
<dbReference type="GO" id="GO:0001835">
    <property type="term" value="P:blastocyst hatching"/>
    <property type="evidence" value="ECO:0000315"/>
    <property type="project" value="MGI"/>
</dbReference>
<dbReference type="GO" id="GO:0030154">
    <property type="term" value="P:cell differentiation"/>
    <property type="evidence" value="ECO:0007669"/>
    <property type="project" value="UniProtKB-KW"/>
</dbReference>
<dbReference type="GO" id="GO:0042149">
    <property type="term" value="P:cellular response to glucose starvation"/>
    <property type="evidence" value="ECO:0000266"/>
    <property type="project" value="ComplexPortal"/>
</dbReference>
<dbReference type="GO" id="GO:0071456">
    <property type="term" value="P:cellular response to hypoxia"/>
    <property type="evidence" value="ECO:0000266"/>
    <property type="project" value="MGI"/>
</dbReference>
<dbReference type="GO" id="GO:0051276">
    <property type="term" value="P:chromosome organization"/>
    <property type="evidence" value="ECO:0000304"/>
    <property type="project" value="MGI"/>
</dbReference>
<dbReference type="GO" id="GO:0007623">
    <property type="term" value="P:circadian rhythm"/>
    <property type="evidence" value="ECO:0000315"/>
    <property type="project" value="UniProtKB"/>
</dbReference>
<dbReference type="GO" id="GO:0008340">
    <property type="term" value="P:determination of adult lifespan"/>
    <property type="evidence" value="ECO:0000316"/>
    <property type="project" value="MGI"/>
</dbReference>
<dbReference type="GO" id="GO:0006974">
    <property type="term" value="P:DNA damage response"/>
    <property type="evidence" value="ECO:0000266"/>
    <property type="project" value="MGI"/>
</dbReference>
<dbReference type="GO" id="GO:0097009">
    <property type="term" value="P:energy homeostasis"/>
    <property type="evidence" value="ECO:0000266"/>
    <property type="project" value="ComplexPortal"/>
</dbReference>
<dbReference type="GO" id="GO:0044725">
    <property type="term" value="P:epigenetic programming in the zygotic pronuclei"/>
    <property type="evidence" value="ECO:0007669"/>
    <property type="project" value="Ensembl"/>
</dbReference>
<dbReference type="GO" id="GO:0031507">
    <property type="term" value="P:heterochromatin formation"/>
    <property type="evidence" value="ECO:0000304"/>
    <property type="project" value="UniProtKB"/>
</dbReference>
<dbReference type="GO" id="GO:0032259">
    <property type="term" value="P:methylation"/>
    <property type="evidence" value="ECO:0007669"/>
    <property type="project" value="UniProtKB-KW"/>
</dbReference>
<dbReference type="GO" id="GO:0045786">
    <property type="term" value="P:negative regulation of cell cycle"/>
    <property type="evidence" value="ECO:0000266"/>
    <property type="project" value="ComplexPortal"/>
</dbReference>
<dbReference type="GO" id="GO:0045892">
    <property type="term" value="P:negative regulation of DNA-templated transcription"/>
    <property type="evidence" value="ECO:0000315"/>
    <property type="project" value="UniProtKB"/>
</dbReference>
<dbReference type="GO" id="GO:0045814">
    <property type="term" value="P:negative regulation of gene expression, epigenetic"/>
    <property type="evidence" value="ECO:0000315"/>
    <property type="project" value="UniProtKB"/>
</dbReference>
<dbReference type="GO" id="GO:0000122">
    <property type="term" value="P:negative regulation of transcription by RNA polymerase II"/>
    <property type="evidence" value="ECO:0000266"/>
    <property type="project" value="MGI"/>
</dbReference>
<dbReference type="GO" id="GO:0000183">
    <property type="term" value="P:rDNA heterochromatin formation"/>
    <property type="evidence" value="ECO:0000266"/>
    <property type="project" value="ComplexPortal"/>
</dbReference>
<dbReference type="GO" id="GO:0030500">
    <property type="term" value="P:regulation of bone mineralization"/>
    <property type="evidence" value="ECO:0000316"/>
    <property type="project" value="MGI"/>
</dbReference>
<dbReference type="GO" id="GO:2000772">
    <property type="term" value="P:regulation of cellular senescence"/>
    <property type="evidence" value="ECO:0000315"/>
    <property type="project" value="MGI"/>
</dbReference>
<dbReference type="GO" id="GO:0006282">
    <property type="term" value="P:regulation of DNA repair"/>
    <property type="evidence" value="ECO:0000315"/>
    <property type="project" value="MGI"/>
</dbReference>
<dbReference type="GO" id="GO:0040014">
    <property type="term" value="P:regulation of multicellular organism growth"/>
    <property type="evidence" value="ECO:0000316"/>
    <property type="project" value="MGI"/>
</dbReference>
<dbReference type="GO" id="GO:0046015">
    <property type="term" value="P:regulation of transcription by glucose"/>
    <property type="evidence" value="ECO:0000266"/>
    <property type="project" value="ComplexPortal"/>
</dbReference>
<dbReference type="GO" id="GO:0006364">
    <property type="term" value="P:rRNA processing"/>
    <property type="evidence" value="ECO:0007669"/>
    <property type="project" value="UniProtKB-KW"/>
</dbReference>
<dbReference type="CDD" id="cd18639">
    <property type="entry name" value="CD_SUV39H1_like"/>
    <property type="match status" value="1"/>
</dbReference>
<dbReference type="CDD" id="cd10525">
    <property type="entry name" value="SET_SUV39H1"/>
    <property type="match status" value="1"/>
</dbReference>
<dbReference type="FunFam" id="2.170.270.10:FF:000008">
    <property type="entry name" value="Histone-lysine N-methyltransferase"/>
    <property type="match status" value="1"/>
</dbReference>
<dbReference type="FunFam" id="2.40.50.40:FF:000015">
    <property type="entry name" value="Histone-lysine N-methyltransferase"/>
    <property type="match status" value="1"/>
</dbReference>
<dbReference type="Gene3D" id="2.40.50.40">
    <property type="match status" value="1"/>
</dbReference>
<dbReference type="Gene3D" id="2.170.270.10">
    <property type="entry name" value="SET domain"/>
    <property type="match status" value="1"/>
</dbReference>
<dbReference type="InterPro" id="IPR016197">
    <property type="entry name" value="Chromo-like_dom_sf"/>
</dbReference>
<dbReference type="InterPro" id="IPR000953">
    <property type="entry name" value="Chromo/chromo_shadow_dom"/>
</dbReference>
<dbReference type="InterPro" id="IPR023780">
    <property type="entry name" value="Chromo_domain"/>
</dbReference>
<dbReference type="InterPro" id="IPR023779">
    <property type="entry name" value="Chromodomain_CS"/>
</dbReference>
<dbReference type="InterPro" id="IPR011381">
    <property type="entry name" value="H3-K9_MeTrfase_SUV39H1/2-like"/>
</dbReference>
<dbReference type="InterPro" id="IPR050973">
    <property type="entry name" value="H3K9_Histone-Lys_N-MTase"/>
</dbReference>
<dbReference type="InterPro" id="IPR003616">
    <property type="entry name" value="Post-SET_dom"/>
</dbReference>
<dbReference type="InterPro" id="IPR007728">
    <property type="entry name" value="Pre-SET_dom"/>
</dbReference>
<dbReference type="InterPro" id="IPR001214">
    <property type="entry name" value="SET_dom"/>
</dbReference>
<dbReference type="InterPro" id="IPR046341">
    <property type="entry name" value="SET_dom_sf"/>
</dbReference>
<dbReference type="PANTHER" id="PTHR46223">
    <property type="entry name" value="HISTONE-LYSINE N-METHYLTRANSFERASE SUV39H"/>
    <property type="match status" value="1"/>
</dbReference>
<dbReference type="PANTHER" id="PTHR46223:SF1">
    <property type="entry name" value="HISTONE-LYSINE N-METHYLTRANSFERASE SUV39H1"/>
    <property type="match status" value="1"/>
</dbReference>
<dbReference type="Pfam" id="PF00385">
    <property type="entry name" value="Chromo"/>
    <property type="match status" value="1"/>
</dbReference>
<dbReference type="Pfam" id="PF05033">
    <property type="entry name" value="Pre-SET"/>
    <property type="match status" value="1"/>
</dbReference>
<dbReference type="Pfam" id="PF00856">
    <property type="entry name" value="SET"/>
    <property type="match status" value="1"/>
</dbReference>
<dbReference type="PIRSF" id="PIRSF009343">
    <property type="entry name" value="SUV39_SET"/>
    <property type="match status" value="1"/>
</dbReference>
<dbReference type="SMART" id="SM00298">
    <property type="entry name" value="CHROMO"/>
    <property type="match status" value="1"/>
</dbReference>
<dbReference type="SMART" id="SM00508">
    <property type="entry name" value="PostSET"/>
    <property type="match status" value="1"/>
</dbReference>
<dbReference type="SMART" id="SM00468">
    <property type="entry name" value="PreSET"/>
    <property type="match status" value="1"/>
</dbReference>
<dbReference type="SMART" id="SM00317">
    <property type="entry name" value="SET"/>
    <property type="match status" value="1"/>
</dbReference>
<dbReference type="SUPFAM" id="SSF54160">
    <property type="entry name" value="Chromo domain-like"/>
    <property type="match status" value="1"/>
</dbReference>
<dbReference type="SUPFAM" id="SSF82199">
    <property type="entry name" value="SET domain"/>
    <property type="match status" value="1"/>
</dbReference>
<dbReference type="PROSITE" id="PS00598">
    <property type="entry name" value="CHROMO_1"/>
    <property type="match status" value="1"/>
</dbReference>
<dbReference type="PROSITE" id="PS50013">
    <property type="entry name" value="CHROMO_2"/>
    <property type="match status" value="1"/>
</dbReference>
<dbReference type="PROSITE" id="PS50868">
    <property type="entry name" value="POST_SET"/>
    <property type="match status" value="1"/>
</dbReference>
<dbReference type="PROSITE" id="PS50867">
    <property type="entry name" value="PRE_SET"/>
    <property type="match status" value="1"/>
</dbReference>
<dbReference type="PROSITE" id="PS51579">
    <property type="entry name" value="SAM_MT43_SUVAR39_3"/>
    <property type="match status" value="1"/>
</dbReference>
<dbReference type="PROSITE" id="PS50280">
    <property type="entry name" value="SET"/>
    <property type="match status" value="1"/>
</dbReference>
<keyword id="KW-0007">Acetylation</keyword>
<keyword id="KW-0025">Alternative splicing</keyword>
<keyword id="KW-0090">Biological rhythms</keyword>
<keyword id="KW-0131">Cell cycle</keyword>
<keyword id="KW-0137">Centromere</keyword>
<keyword id="KW-0156">Chromatin regulator</keyword>
<keyword id="KW-0158">Chromosome</keyword>
<keyword id="KW-0221">Differentiation</keyword>
<keyword id="KW-0479">Metal-binding</keyword>
<keyword id="KW-0489">Methyltransferase</keyword>
<keyword id="KW-0539">Nucleus</keyword>
<keyword id="KW-0597">Phosphoprotein</keyword>
<keyword id="KW-1185">Reference proteome</keyword>
<keyword id="KW-0678">Repressor</keyword>
<keyword id="KW-0698">rRNA processing</keyword>
<keyword id="KW-0949">S-adenosyl-L-methionine</keyword>
<keyword id="KW-0804">Transcription</keyword>
<keyword id="KW-0805">Transcription regulation</keyword>
<keyword id="KW-0808">Transferase</keyword>
<keyword id="KW-0832">Ubl conjugation</keyword>
<keyword id="KW-0862">Zinc</keyword>
<accession>O54864</accession>
<accession>Q3TEW2</accession>
<accession>Q3UT51</accession>
<accession>Q8C2L3</accession>
<accession>Q9JLC7</accession>
<accession>Q9JLP8</accession>
<proteinExistence type="evidence at protein level"/>
<comment type="function">
    <text evidence="11 13 14 15 16 17 20 21">Histone methyltransferase that specifically trimethylates 'Lys-9' of histone H3 using monomethylated H3 'Lys-9' as substrate. H3 'Lys-9' trimethylation represents a specific tag for epigenetic transcriptional repression by recruiting HP1 (CBX1, CBX3 and/or CBX5) proteins to methylated histones. Mainly functions in heterochromatin regions, thereby playing a central role in the establishment of constitutive heterochromatin at pericentric and telomere regions. H3 'Lys-9' trimethylation is also required to direct DNA methylation at pericentric repeats. SUV39H1 is targeted to histone H3 via its interaction with RB1 and is involved in many processes, such as repression of MYOD1-stimulated differentiation, regulation of the control switch for exiting the cell cycle and entering differentiation, repression by the PML-RARA fusion protein, BMP-induced repression, repression of switch recombination to IgA and regulation of telomere length. Component of the eNoSC (energy-dependent nucleolar silencing) complex, a complex that mediates silencing of rDNA in response to intracellular energy status and acts by recruiting histone-modifying enzymes. The eNoSC complex is able to sense the energy status of cell: upon glucose starvation, elevation of NAD(+)/NADP(+) ratio activates SIRT1, leading to histone H3 deacetylation followed by dimethylation of H3 at 'Lys-9' (H3K9me2) by SUV39H1 and the formation of silent chromatin in the rDNA locus. Recruited by the PER complex to the E-box elements of the circadian target genes such as PER2 itself or PER1, contributes to the conversion of local chromatin to a heterochromatin-like repressive state through H3 'Lys-9' trimethylation.</text>
</comment>
<comment type="catalytic activity">
    <reaction evidence="7 9">
        <text>L-lysyl(9)-[histone H3] + 3 S-adenosyl-L-methionine = N(6),N(6),N(6)-trimethyl-L-lysyl(9)-[histone H3] + 3 S-adenosyl-L-homocysteine + 3 H(+)</text>
        <dbReference type="Rhea" id="RHEA:60276"/>
        <dbReference type="Rhea" id="RHEA-COMP:15538"/>
        <dbReference type="Rhea" id="RHEA-COMP:15546"/>
        <dbReference type="ChEBI" id="CHEBI:15378"/>
        <dbReference type="ChEBI" id="CHEBI:29969"/>
        <dbReference type="ChEBI" id="CHEBI:57856"/>
        <dbReference type="ChEBI" id="CHEBI:59789"/>
        <dbReference type="ChEBI" id="CHEBI:61961"/>
        <dbReference type="EC" id="2.1.1.355"/>
    </reaction>
</comment>
<comment type="activity regulation">
    <text evidence="1">Negatively regulated by CCAR2.</text>
</comment>
<comment type="subunit">
    <text evidence="1 8 12 13 18 19">Interacts with CCAR2 and GFI1B. Component of the eNoSC complex, composed of SIRT1, SUV39H1 and RRP8 (By similarity). Interacts with H3 and H4 histones. Interacts with DNMT3B, CBX1, CBX4, MBD1, RUNX1, RUNX3, MYOD1, SMAD5 and RB1. Interacts with SBF1 through the SET domain. Interacts with HDAC1 and HDAC2 through the N-terminus and associates with the core histone deacetylase complex composed of HDAC1, HDAC2, RBBP4 and RBBP7. Interacts (via SET domain) with MECOM; enhances MECOM transcriptional repression activity. Interacts with LMNA; the interaction increases stability of SUV39H1. The large PER complex involved in the histone methylation is composed of at least PER2, CBX3, TRIM28, SUV39H1 and/or SUV39H2; CBX3 mediates the formation of the complex.</text>
</comment>
<comment type="interaction">
    <interactant intactId="EBI-302230">
        <id>O54864</id>
    </interactant>
    <interactant intactId="EBI-4287943">
        <id>O70237</id>
        <label>Gfi1b</label>
    </interactant>
    <organismsDiffer>false</organismsDiffer>
    <experiments>2</experiments>
</comment>
<comment type="interaction">
    <interactant intactId="EBI-302230">
        <id>O54864</id>
    </interactant>
    <interactant intactId="EBI-4405734">
        <id>P10085</id>
        <label>Myod1</label>
    </interactant>
    <organismsDiffer>false</organismsDiffer>
    <experiments>3</experiments>
</comment>
<comment type="subcellular location">
    <subcellularLocation>
        <location evidence="2">Nucleus</location>
    </subcellularLocation>
    <subcellularLocation>
        <location evidence="1">Nucleus lamina</location>
    </subcellularLocation>
    <subcellularLocation>
        <location evidence="1">Nucleus</location>
        <location evidence="1">Nucleoplasm</location>
    </subcellularLocation>
    <subcellularLocation>
        <location>Chromosome</location>
        <location>Centromere</location>
    </subcellularLocation>
    <text>Associates with centromeric constitutive heterochromatin.</text>
</comment>
<comment type="alternative products">
    <event type="alternative splicing"/>
    <isoform>
        <id>O54864-1</id>
        <name>1</name>
        <sequence type="displayed"/>
    </isoform>
    <isoform>
        <id>O54864-2</id>
        <name>2</name>
        <sequence type="described" ref="VSP_002208"/>
    </isoform>
    <isoform>
        <id>O54864-3</id>
        <name>3</name>
        <sequence type="described" ref="VSP_024029 VSP_024030"/>
    </isoform>
</comment>
<comment type="tissue specificity">
    <text evidence="8 10">Widely expressed.</text>
</comment>
<comment type="developmental stage">
    <text>Expression present throughout embryogenesis. Higher expression between 9.5 dpc and 13 dpc.</text>
</comment>
<comment type="domain">
    <text>Although the SET domain contains the active site of enzymatic activity, both pre-SET and post-SET domains are required for methyltransferase activity. The SET domain also participates in stable binding to heterochromatin.</text>
</comment>
<comment type="domain">
    <text evidence="1">In the pre-SET domain, Cys residues bind 3 zinc ions that are arranged in a triangular cluster; some of these Cys residues contribute to the binding of two zinc ions within the cluster.</text>
</comment>
<comment type="PTM">
    <text evidence="1">Phosphorylated on serine residues, and to a lesser degree, on threonine residues.</text>
</comment>
<comment type="PTM">
    <text evidence="1">Acetylated at Lys-266, leading to inhibition of enzyme activity. SIRT1-mediated deacetylation relieves this inhibition (By similarity).</text>
</comment>
<comment type="PTM">
    <text evidence="21">Ubiquitinated by the DCX(DCAF13) E3 ubiquitin ligase complex, leading to its degradation.</text>
</comment>
<comment type="disruption phenotype">
    <text evidence="11">Mice lacking Suv39h1 and Suv39h2 display severely impaired viability and chromosomal instabilities that are associated with an increased tumor risk and perturbed chromosome interactions during male meiosis. They also show a higher level of histone H3 with phosphorylated 'Ser-10' and a reduced number of cells in G1 phase and an increased portion of cells with aberrant nuclear morphologies.</text>
</comment>
<comment type="miscellaneous">
    <molecule>Isoform 2</molecule>
    <text evidence="23">Incomplete sequence.</text>
</comment>
<comment type="similarity">
    <text evidence="7">Belongs to the class V-like SAM-binding methyltransferase superfamily. Histone-lysine methyltransferase family. Suvar3-9 subfamily.</text>
</comment>
<comment type="sequence caution" evidence="23">
    <molecule>Isoform 2</molecule>
    <conflict type="frameshift">
        <sequence resource="EMBL-CDS" id="AAF60970"/>
    </conflict>
</comment>
<name>SUV91_MOUSE</name>
<organism>
    <name type="scientific">Mus musculus</name>
    <name type="common">Mouse</name>
    <dbReference type="NCBI Taxonomy" id="10090"/>
    <lineage>
        <taxon>Eukaryota</taxon>
        <taxon>Metazoa</taxon>
        <taxon>Chordata</taxon>
        <taxon>Craniata</taxon>
        <taxon>Vertebrata</taxon>
        <taxon>Euteleostomi</taxon>
        <taxon>Mammalia</taxon>
        <taxon>Eutheria</taxon>
        <taxon>Euarchontoglires</taxon>
        <taxon>Glires</taxon>
        <taxon>Rodentia</taxon>
        <taxon>Myomorpha</taxon>
        <taxon>Muroidea</taxon>
        <taxon>Muridae</taxon>
        <taxon>Murinae</taxon>
        <taxon>Mus</taxon>
        <taxon>Mus</taxon>
    </lineage>
</organism>
<sequence length="412" mass="47754">MAENLKGCSVCCKSSWNQLQDLCRLAKLSCPALGVSKKNLYDFEVEYLCDYKKIREQEYYLVKWRGYPDSENTWEPRQNLKCIRVLKQFHKDLERELVRRHRRSKPPRHLDPNLANYLVQKAKQRRALQRWEQELNAKRSHLGRITVENEVDLDGPPRSFVYINEYRVGEGITLNQVAVGCECQDCLLAPTGGCCPGASLHKFAYNDQGQVRLKAGQPIYECNSRCCCGYDCPNRVVQKGIRYDLCIFRTNDGRGWGVRTLEKIRKNSFVMEYVGEIITSEEAERRGQIYDRQGATYLFDLDYVEDVYTVDAAYYGNISHFVNHSCDPNLQVYNVFIDNLDERLPRIAFFATRTIWAGEELTFDYNMQVDPVDMESTRMDSNFGLAGLPGSPKKRVRIECKCGTTACRKYLF</sequence>
<reference key="1">
    <citation type="journal article" date="1999" name="EMBO J.">
        <title>Functional mammalian homologues of the Drosophila PEV-modifier Su(var)3-9 encode centromere-associated proteins which complex with the heterochromatin component M31.</title>
        <authorList>
            <person name="Aagaard L."/>
            <person name="Laible G."/>
            <person name="Selenko P."/>
            <person name="Schmid M."/>
            <person name="Dorn R."/>
            <person name="Schotta G."/>
            <person name="Kuhfittig S."/>
            <person name="Wolf A."/>
            <person name="Lebersorger A."/>
            <person name="Singh P.B."/>
            <person name="Reuter G."/>
            <person name="Jenuwein T."/>
        </authorList>
    </citation>
    <scope>NUCLEOTIDE SEQUENCE [MRNA] (ISOFORM 1)</scope>
    <scope>SUBCELLULAR LOCATION</scope>
    <scope>TISSUE SPECIFICITY</scope>
    <scope>INTERACTION WITH CBX1</scope>
    <source>
        <tissue>Brain</tissue>
    </source>
</reference>
<reference key="2">
    <citation type="journal article" date="2000" name="Mamm. Genome">
        <title>Molecular and genetic analysis of the mouse homolog of the Drosophila suppressor of position-effect variegation 3-9 gene.</title>
        <authorList>
            <person name="Bultman S."/>
            <person name="Magnuson T."/>
        </authorList>
    </citation>
    <scope>NUCLEOTIDE SEQUENCE [MRNA] (ISOFORM 1)</scope>
    <scope>PARTIAL NUCLEOTIDE SEQUENCE [MRNA] (ISOFORM 2)</scope>
    <source>
        <tissue>Embryo</tissue>
    </source>
</reference>
<reference key="3">
    <citation type="journal article" date="2005" name="Science">
        <title>The transcriptional landscape of the mammalian genome.</title>
        <authorList>
            <person name="Carninci P."/>
            <person name="Kasukawa T."/>
            <person name="Katayama S."/>
            <person name="Gough J."/>
            <person name="Frith M.C."/>
            <person name="Maeda N."/>
            <person name="Oyama R."/>
            <person name="Ravasi T."/>
            <person name="Lenhard B."/>
            <person name="Wells C."/>
            <person name="Kodzius R."/>
            <person name="Shimokawa K."/>
            <person name="Bajic V.B."/>
            <person name="Brenner S.E."/>
            <person name="Batalov S."/>
            <person name="Forrest A.R."/>
            <person name="Zavolan M."/>
            <person name="Davis M.J."/>
            <person name="Wilming L.G."/>
            <person name="Aidinis V."/>
            <person name="Allen J.E."/>
            <person name="Ambesi-Impiombato A."/>
            <person name="Apweiler R."/>
            <person name="Aturaliya R.N."/>
            <person name="Bailey T.L."/>
            <person name="Bansal M."/>
            <person name="Baxter L."/>
            <person name="Beisel K.W."/>
            <person name="Bersano T."/>
            <person name="Bono H."/>
            <person name="Chalk A.M."/>
            <person name="Chiu K.P."/>
            <person name="Choudhary V."/>
            <person name="Christoffels A."/>
            <person name="Clutterbuck D.R."/>
            <person name="Crowe M.L."/>
            <person name="Dalla E."/>
            <person name="Dalrymple B.P."/>
            <person name="de Bono B."/>
            <person name="Della Gatta G."/>
            <person name="di Bernardo D."/>
            <person name="Down T."/>
            <person name="Engstrom P."/>
            <person name="Fagiolini M."/>
            <person name="Faulkner G."/>
            <person name="Fletcher C.F."/>
            <person name="Fukushima T."/>
            <person name="Furuno M."/>
            <person name="Futaki S."/>
            <person name="Gariboldi M."/>
            <person name="Georgii-Hemming P."/>
            <person name="Gingeras T.R."/>
            <person name="Gojobori T."/>
            <person name="Green R.E."/>
            <person name="Gustincich S."/>
            <person name="Harbers M."/>
            <person name="Hayashi Y."/>
            <person name="Hensch T.K."/>
            <person name="Hirokawa N."/>
            <person name="Hill D."/>
            <person name="Huminiecki L."/>
            <person name="Iacono M."/>
            <person name="Ikeo K."/>
            <person name="Iwama A."/>
            <person name="Ishikawa T."/>
            <person name="Jakt M."/>
            <person name="Kanapin A."/>
            <person name="Katoh M."/>
            <person name="Kawasawa Y."/>
            <person name="Kelso J."/>
            <person name="Kitamura H."/>
            <person name="Kitano H."/>
            <person name="Kollias G."/>
            <person name="Krishnan S.P."/>
            <person name="Kruger A."/>
            <person name="Kummerfeld S.K."/>
            <person name="Kurochkin I.V."/>
            <person name="Lareau L.F."/>
            <person name="Lazarevic D."/>
            <person name="Lipovich L."/>
            <person name="Liu J."/>
            <person name="Liuni S."/>
            <person name="McWilliam S."/>
            <person name="Madan Babu M."/>
            <person name="Madera M."/>
            <person name="Marchionni L."/>
            <person name="Matsuda H."/>
            <person name="Matsuzawa S."/>
            <person name="Miki H."/>
            <person name="Mignone F."/>
            <person name="Miyake S."/>
            <person name="Morris K."/>
            <person name="Mottagui-Tabar S."/>
            <person name="Mulder N."/>
            <person name="Nakano N."/>
            <person name="Nakauchi H."/>
            <person name="Ng P."/>
            <person name="Nilsson R."/>
            <person name="Nishiguchi S."/>
            <person name="Nishikawa S."/>
            <person name="Nori F."/>
            <person name="Ohara O."/>
            <person name="Okazaki Y."/>
            <person name="Orlando V."/>
            <person name="Pang K.C."/>
            <person name="Pavan W.J."/>
            <person name="Pavesi G."/>
            <person name="Pesole G."/>
            <person name="Petrovsky N."/>
            <person name="Piazza S."/>
            <person name="Reed J."/>
            <person name="Reid J.F."/>
            <person name="Ring B.Z."/>
            <person name="Ringwald M."/>
            <person name="Rost B."/>
            <person name="Ruan Y."/>
            <person name="Salzberg S.L."/>
            <person name="Sandelin A."/>
            <person name="Schneider C."/>
            <person name="Schoenbach C."/>
            <person name="Sekiguchi K."/>
            <person name="Semple C.A."/>
            <person name="Seno S."/>
            <person name="Sessa L."/>
            <person name="Sheng Y."/>
            <person name="Shibata Y."/>
            <person name="Shimada H."/>
            <person name="Shimada K."/>
            <person name="Silva D."/>
            <person name="Sinclair B."/>
            <person name="Sperling S."/>
            <person name="Stupka E."/>
            <person name="Sugiura K."/>
            <person name="Sultana R."/>
            <person name="Takenaka Y."/>
            <person name="Taki K."/>
            <person name="Tammoja K."/>
            <person name="Tan S.L."/>
            <person name="Tang S."/>
            <person name="Taylor M.S."/>
            <person name="Tegner J."/>
            <person name="Teichmann S.A."/>
            <person name="Ueda H.R."/>
            <person name="van Nimwegen E."/>
            <person name="Verardo R."/>
            <person name="Wei C.L."/>
            <person name="Yagi K."/>
            <person name="Yamanishi H."/>
            <person name="Zabarovsky E."/>
            <person name="Zhu S."/>
            <person name="Zimmer A."/>
            <person name="Hide W."/>
            <person name="Bult C."/>
            <person name="Grimmond S.M."/>
            <person name="Teasdale R.D."/>
            <person name="Liu E.T."/>
            <person name="Brusic V."/>
            <person name="Quackenbush J."/>
            <person name="Wahlestedt C."/>
            <person name="Mattick J.S."/>
            <person name="Hume D.A."/>
            <person name="Kai C."/>
            <person name="Sasaki D."/>
            <person name="Tomaru Y."/>
            <person name="Fukuda S."/>
            <person name="Kanamori-Katayama M."/>
            <person name="Suzuki M."/>
            <person name="Aoki J."/>
            <person name="Arakawa T."/>
            <person name="Iida J."/>
            <person name="Imamura K."/>
            <person name="Itoh M."/>
            <person name="Kato T."/>
            <person name="Kawaji H."/>
            <person name="Kawagashira N."/>
            <person name="Kawashima T."/>
            <person name="Kojima M."/>
            <person name="Kondo S."/>
            <person name="Konno H."/>
            <person name="Nakano K."/>
            <person name="Ninomiya N."/>
            <person name="Nishio T."/>
            <person name="Okada M."/>
            <person name="Plessy C."/>
            <person name="Shibata K."/>
            <person name="Shiraki T."/>
            <person name="Suzuki S."/>
            <person name="Tagami M."/>
            <person name="Waki K."/>
            <person name="Watahiki A."/>
            <person name="Okamura-Oho Y."/>
            <person name="Suzuki H."/>
            <person name="Kawai J."/>
            <person name="Hayashizaki Y."/>
        </authorList>
    </citation>
    <scope>NUCLEOTIDE SEQUENCE [LARGE SCALE MRNA] (ISOFORMS 1 AND 3)</scope>
    <source>
        <strain>C57BL/6J</strain>
        <strain>NOD</strain>
        <tissue>Egg</tissue>
        <tissue>Liver</tissue>
        <tissue>Thymus</tissue>
    </source>
</reference>
<reference key="4">
    <citation type="journal article" date="2009" name="PLoS Biol.">
        <title>Lineage-specific biology revealed by a finished genome assembly of the mouse.</title>
        <authorList>
            <person name="Church D.M."/>
            <person name="Goodstadt L."/>
            <person name="Hillier L.W."/>
            <person name="Zody M.C."/>
            <person name="Goldstein S."/>
            <person name="She X."/>
            <person name="Bult C.J."/>
            <person name="Agarwala R."/>
            <person name="Cherry J.L."/>
            <person name="DiCuccio M."/>
            <person name="Hlavina W."/>
            <person name="Kapustin Y."/>
            <person name="Meric P."/>
            <person name="Maglott D."/>
            <person name="Birtle Z."/>
            <person name="Marques A.C."/>
            <person name="Graves T."/>
            <person name="Zhou S."/>
            <person name="Teague B."/>
            <person name="Potamousis K."/>
            <person name="Churas C."/>
            <person name="Place M."/>
            <person name="Herschleb J."/>
            <person name="Runnheim R."/>
            <person name="Forrest D."/>
            <person name="Amos-Landgraf J."/>
            <person name="Schwartz D.C."/>
            <person name="Cheng Z."/>
            <person name="Lindblad-Toh K."/>
            <person name="Eichler E.E."/>
            <person name="Ponting C.P."/>
        </authorList>
    </citation>
    <scope>NUCLEOTIDE SEQUENCE [LARGE SCALE GENOMIC DNA]</scope>
    <source>
        <strain>C57BL/6J</strain>
    </source>
</reference>
<reference key="5">
    <citation type="journal article" date="2004" name="Genome Res.">
        <title>The status, quality, and expansion of the NIH full-length cDNA project: the Mammalian Gene Collection (MGC).</title>
        <authorList>
            <consortium name="The MGC Project Team"/>
        </authorList>
    </citation>
    <scope>NUCLEOTIDE SEQUENCE [LARGE SCALE MRNA] (ISOFORM 1)</scope>
    <source>
        <strain>FVB/N</strain>
        <tissue>Mammary gland</tissue>
    </source>
</reference>
<reference key="6">
    <citation type="journal article" date="2000" name="Mol. Cell. Biol.">
        <title>Isolation and characterization of Suv39h2, a second histone H3 methyltransferase gene that displays testis-specific expression.</title>
        <authorList>
            <person name="O'Carroll D."/>
            <person name="Scherthan H."/>
            <person name="Peters A.H.F.M."/>
            <person name="Opravil S."/>
            <person name="Haynes A.R."/>
            <person name="Laible G."/>
            <person name="Rea S."/>
            <person name="Schmid M."/>
            <person name="Lebersorger A."/>
            <person name="Jerratsch M."/>
            <person name="Sattler L."/>
            <person name="Mattei M.-G."/>
            <person name="Denny P."/>
            <person name="Brown S.D.M."/>
            <person name="Schweizer D."/>
            <person name="Jenuwein T."/>
        </authorList>
    </citation>
    <scope>NUCLEOTIDE SEQUENCE [GENOMIC DNA] OF 1-276</scope>
    <scope>TISSUE SPECIFICITY</scope>
    <source>
        <strain>C57BL/6J</strain>
    </source>
</reference>
<reference key="7">
    <citation type="journal article" date="2000" name="Nature">
        <title>Regulation of chromatin structure by site-specific histone H3 methyltransferases.</title>
        <authorList>
            <person name="Rea S."/>
            <person name="Eisenhaber F."/>
            <person name="O'Carroll D."/>
            <person name="Strahl B.D."/>
            <person name="Sun Z.-W."/>
            <person name="Schmid M."/>
            <person name="Opravil S."/>
            <person name="Mechtler K."/>
            <person name="Ponting C.P."/>
            <person name="Allis C.D."/>
            <person name="Jenuwein T."/>
        </authorList>
    </citation>
    <scope>CATALYTIC ACTIVITY</scope>
</reference>
<reference key="8">
    <citation type="journal article" date="2001" name="Cell">
        <title>Loss of the Suv39h histone methyltransferases impairs mammalian heterochromatin and genome stability.</title>
        <authorList>
            <person name="Peters A.H.F.M."/>
            <person name="O'Carroll D."/>
            <person name="Scherthan H."/>
            <person name="Mechtler K."/>
            <person name="Sauer S."/>
            <person name="Schofer C."/>
            <person name="Weipoltshammer K."/>
            <person name="Pagani M."/>
            <person name="Lachner M."/>
            <person name="Kohlmaier A."/>
            <person name="Opravil S."/>
            <person name="Doyle M."/>
            <person name="Sibilia M."/>
            <person name="Jenuwein T."/>
        </authorList>
    </citation>
    <scope>FUNCTION</scope>
    <scope>DISRUPTION PHENOTYPE</scope>
</reference>
<reference key="9">
    <citation type="journal article" date="2002" name="Nucleic Acids Res.">
        <title>Functional and physical interaction between the histone methyl transferase Suv39H1 and histone deacetylases.</title>
        <authorList>
            <person name="Vaute O."/>
            <person name="Nicolas E."/>
            <person name="Vandel L."/>
            <person name="Trouche D."/>
        </authorList>
    </citation>
    <scope>INTERACTION WITH HISTONE DEACETYLASE COMPLEX</scope>
</reference>
<reference key="10">
    <citation type="journal article" date="2003" name="Curr. Biol.">
        <title>Suv39h-mediated histone H3 lysine 9 methylation directs DNA methylation to major satellite repeats at pericentric heterochromatin.</title>
        <authorList>
            <person name="Lehnertz B."/>
            <person name="Ueda Y."/>
            <person name="Derijck A.A.H.A."/>
            <person name="Braunschweig U."/>
            <person name="Perez-Burgos L."/>
            <person name="Kubicek S."/>
            <person name="Chen T."/>
            <person name="Li E."/>
            <person name="Jenuwein T."/>
            <person name="Peters A.H.F.M."/>
        </authorList>
    </citation>
    <scope>FUNCTION</scope>
    <scope>INTERACTION WITH DNMT3B</scope>
</reference>
<reference key="11">
    <citation type="journal article" date="2003" name="Mol. Cell">
        <title>Partitioning and plasticity of repressive histone methylation states in mammalian chromatin.</title>
        <authorList>
            <person name="Peters A.H.F.M."/>
            <person name="Kubicek S."/>
            <person name="Mechtler K."/>
            <person name="O'Sullivan R.J."/>
            <person name="Derijck A.A."/>
            <person name="Perez-Burgos L."/>
            <person name="Kohlmaier A."/>
            <person name="Opravil S."/>
            <person name="Tachibana M."/>
            <person name="Shinkai Y."/>
            <person name="Martens J.H.A."/>
            <person name="Jenuwein T."/>
        </authorList>
    </citation>
    <scope>FUNCTION</scope>
</reference>
<reference key="12">
    <citation type="journal article" date="2003" name="Mol. Cell">
        <title>Histone methyltransferases direct different degrees of methylation to define distinct chromatin domains.</title>
        <authorList>
            <person name="Rice J.C."/>
            <person name="Briggs S.D."/>
            <person name="Ueberheide B."/>
            <person name="Barber C.M."/>
            <person name="Shabanowitz J."/>
            <person name="Hunt D.F."/>
            <person name="Shinkai Y."/>
            <person name="Allis C.D."/>
        </authorList>
    </citation>
    <scope>FUNCTION</scope>
</reference>
<reference key="13">
    <citation type="journal article" date="2004" name="Nat. Genet.">
        <title>Epigenetic regulation of telomere length in mammalian cells by the Suv39h1 and Suv39h2 histone methyltransferases.</title>
        <authorList>
            <person name="Garcia-Cao M."/>
            <person name="O'Sullivan R."/>
            <person name="Peters A.H.F.M."/>
            <person name="Jenuwein T."/>
            <person name="Blasco M.A."/>
        </authorList>
    </citation>
    <scope>FUNCTION</scope>
</reference>
<reference key="14">
    <citation type="journal article" date="2007" name="Nature">
        <title>SIRT1 regulates the histone methyl-transferase SUV39H1 during heterochromatin formation.</title>
        <authorList>
            <person name="Vaquero A."/>
            <person name="Scher M."/>
            <person name="Erdjument-Bromage H."/>
            <person name="Tempst P."/>
            <person name="Serrano L."/>
            <person name="Reinberg D."/>
        </authorList>
    </citation>
    <scope>FUNCTION</scope>
    <scope>SUBCELLULAR LOCATION</scope>
</reference>
<reference key="15">
    <citation type="journal article" date="2007" name="Proc. Natl. Acad. Sci. U.S.A.">
        <title>Large-scale phosphorylation analysis of mouse liver.</title>
        <authorList>
            <person name="Villen J."/>
            <person name="Beausoleil S.A."/>
            <person name="Gerber S.A."/>
            <person name="Gygi S.P."/>
        </authorList>
    </citation>
    <scope>PHOSPHORYLATION [LARGE SCALE ANALYSIS] AT SER-391</scope>
    <scope>IDENTIFICATION BY MASS SPECTROMETRY [LARGE SCALE ANALYSIS]</scope>
    <source>
        <tissue>Liver</tissue>
    </source>
</reference>
<reference key="16">
    <citation type="journal article" date="2010" name="Cell">
        <title>A tissue-specific atlas of mouse protein phosphorylation and expression.</title>
        <authorList>
            <person name="Huttlin E.L."/>
            <person name="Jedrychowski M.P."/>
            <person name="Elias J.E."/>
            <person name="Goswami T."/>
            <person name="Rad R."/>
            <person name="Beausoleil S.A."/>
            <person name="Villen J."/>
            <person name="Haas W."/>
            <person name="Sowa M.E."/>
            <person name="Gygi S.P."/>
        </authorList>
    </citation>
    <scope>PHOSPHORYLATION [LARGE SCALE ANALYSIS] AT SER-391</scope>
    <scope>IDENTIFICATION BY MASS SPECTROMETRY [LARGE SCALE ANALYSIS]</scope>
    <source>
        <tissue>Lung</tissue>
        <tissue>Spleen</tissue>
        <tissue>Testis</tissue>
    </source>
</reference>
<reference key="17">
    <citation type="journal article" date="2013" name="Nat. Commun.">
        <title>Depleting the methyltransferase Suv39h1 improves DNA repair and extends lifespan in a progeria mouse model.</title>
        <authorList>
            <person name="Liu B."/>
            <person name="Wang Z."/>
            <person name="Zhang L."/>
            <person name="Ghosh S."/>
            <person name="Zheng H."/>
            <person name="Zhou Z."/>
        </authorList>
    </citation>
    <scope>INTERACTION WITH LMNA</scope>
</reference>
<reference key="18">
    <citation type="journal article" date="2008" name="FEBS Lett.">
        <title>A novel interaction between the proto-oncogene Evi1 and histone methyltransferases, SUV39H1 and G9a.</title>
        <authorList>
            <person name="Spensberger D."/>
            <person name="Delwel R."/>
        </authorList>
    </citation>
    <scope>INTERACTION WITH MECOM</scope>
</reference>
<reference key="19">
    <citation type="journal article" date="2014" name="Nat. Struct. Mol. Biol.">
        <title>Temporal orchestration of repressive chromatin modifiers by circadian clock Period complexes.</title>
        <authorList>
            <person name="Duong H.A."/>
            <person name="Weitz C.J."/>
        </authorList>
    </citation>
    <scope>FUNCTION IN CIRCADIAN RHYTHMS</scope>
    <scope>IDENTIFICATION IN A LARGE PER COMPLEX</scope>
</reference>
<reference key="20">
    <citation type="journal article" date="2018" name="EMBO J.">
        <title>DCAF13 promotes pluripotency by negatively regulating SUV39H1 stability during early embryonic development.</title>
        <authorList>
            <person name="Zhang Y.L."/>
            <person name="Zhao L.W."/>
            <person name="Zhang J."/>
            <person name="Le R."/>
            <person name="Ji S.Y."/>
            <person name="Chen C."/>
            <person name="Gao Y."/>
            <person name="Li D."/>
            <person name="Gao S."/>
            <person name="Fan H.Y."/>
        </authorList>
    </citation>
    <scope>FUNCTION</scope>
    <scope>UBIQUITINATION</scope>
    <scope>MUTAGENESIS OF 324-HIS--CYS-326</scope>
</reference>
<feature type="chain" id="PRO_0000186058" description="Histone-lysine N-methyltransferase SUV39H1">
    <location>
        <begin position="1"/>
        <end position="412"/>
    </location>
</feature>
<feature type="domain" description="Chromo" evidence="3">
    <location>
        <begin position="43"/>
        <end position="101"/>
    </location>
</feature>
<feature type="domain" description="Pre-SET" evidence="5">
    <location>
        <begin position="179"/>
        <end position="240"/>
    </location>
</feature>
<feature type="domain" description="SET" evidence="6">
    <location>
        <begin position="243"/>
        <end position="366"/>
    </location>
</feature>
<feature type="domain" description="Post-SET" evidence="4">
    <location>
        <begin position="396"/>
        <end position="412"/>
    </location>
</feature>
<feature type="region of interest" description="Interaction with SIRT1">
    <location>
        <begin position="1"/>
        <end position="89"/>
    </location>
</feature>
<feature type="region of interest" description="Mediates interaction with MECOM" evidence="18">
    <location>
        <begin position="255"/>
        <end position="377"/>
    </location>
</feature>
<feature type="binding site" evidence="1">
    <location>
        <position position="181"/>
    </location>
    <ligand>
        <name>Zn(2+)</name>
        <dbReference type="ChEBI" id="CHEBI:29105"/>
        <label>1</label>
    </ligand>
</feature>
<feature type="binding site" evidence="1">
    <location>
        <position position="181"/>
    </location>
    <ligand>
        <name>Zn(2+)</name>
        <dbReference type="ChEBI" id="CHEBI:29105"/>
        <label>2</label>
    </ligand>
</feature>
<feature type="binding site" evidence="1">
    <location>
        <position position="183"/>
    </location>
    <ligand>
        <name>Zn(2+)</name>
        <dbReference type="ChEBI" id="CHEBI:29105"/>
        <label>1</label>
    </ligand>
</feature>
<feature type="binding site" evidence="1">
    <location>
        <position position="186"/>
    </location>
    <ligand>
        <name>Zn(2+)</name>
        <dbReference type="ChEBI" id="CHEBI:29105"/>
        <label>1</label>
    </ligand>
</feature>
<feature type="binding site" evidence="1">
    <location>
        <position position="186"/>
    </location>
    <ligand>
        <name>Zn(2+)</name>
        <dbReference type="ChEBI" id="CHEBI:29105"/>
        <label>3</label>
    </ligand>
</feature>
<feature type="binding site" evidence="1">
    <location>
        <position position="194"/>
    </location>
    <ligand>
        <name>Zn(2+)</name>
        <dbReference type="ChEBI" id="CHEBI:29105"/>
        <label>1</label>
    </ligand>
</feature>
<feature type="binding site" evidence="1">
    <location>
        <position position="195"/>
    </location>
    <ligand>
        <name>Zn(2+)</name>
        <dbReference type="ChEBI" id="CHEBI:29105"/>
        <label>1</label>
    </ligand>
</feature>
<feature type="binding site" evidence="1">
    <location>
        <position position="195"/>
    </location>
    <ligand>
        <name>Zn(2+)</name>
        <dbReference type="ChEBI" id="CHEBI:29105"/>
        <label>2</label>
    </ligand>
</feature>
<feature type="binding site" evidence="1">
    <location>
        <position position="222"/>
    </location>
    <ligand>
        <name>Zn(2+)</name>
        <dbReference type="ChEBI" id="CHEBI:29105"/>
        <label>2</label>
    </ligand>
</feature>
<feature type="binding site" evidence="1">
    <location>
        <position position="222"/>
    </location>
    <ligand>
        <name>Zn(2+)</name>
        <dbReference type="ChEBI" id="CHEBI:29105"/>
        <label>3</label>
    </ligand>
</feature>
<feature type="binding site" evidence="1">
    <location>
        <position position="226"/>
    </location>
    <ligand>
        <name>Zn(2+)</name>
        <dbReference type="ChEBI" id="CHEBI:29105"/>
        <label>2</label>
    </ligand>
</feature>
<feature type="binding site" evidence="1">
    <location>
        <position position="228"/>
    </location>
    <ligand>
        <name>Zn(2+)</name>
        <dbReference type="ChEBI" id="CHEBI:29105"/>
        <label>3</label>
    </ligand>
</feature>
<feature type="binding site" evidence="1">
    <location>
        <position position="232"/>
    </location>
    <ligand>
        <name>Zn(2+)</name>
        <dbReference type="ChEBI" id="CHEBI:29105"/>
        <label>3</label>
    </ligand>
</feature>
<feature type="binding site" evidence="1">
    <location>
        <begin position="254"/>
        <end position="256"/>
    </location>
    <ligand>
        <name>S-adenosyl-L-methionine</name>
        <dbReference type="ChEBI" id="CHEBI:59789"/>
    </ligand>
</feature>
<feature type="binding site" evidence="6">
    <location>
        <position position="297"/>
    </location>
    <ligand>
        <name>S-adenosyl-L-methionine</name>
        <dbReference type="ChEBI" id="CHEBI:59789"/>
    </ligand>
</feature>
<feature type="binding site" evidence="1">
    <location>
        <begin position="323"/>
        <end position="324"/>
    </location>
    <ligand>
        <name>S-adenosyl-L-methionine</name>
        <dbReference type="ChEBI" id="CHEBI:59789"/>
    </ligand>
</feature>
<feature type="binding site" evidence="1">
    <location>
        <position position="326"/>
    </location>
    <ligand>
        <name>Zn(2+)</name>
        <dbReference type="ChEBI" id="CHEBI:29105"/>
        <label>4</label>
    </ligand>
</feature>
<feature type="binding site" evidence="1">
    <location>
        <position position="400"/>
    </location>
    <ligand>
        <name>Zn(2+)</name>
        <dbReference type="ChEBI" id="CHEBI:29105"/>
        <label>4</label>
    </ligand>
</feature>
<feature type="binding site" evidence="1">
    <location>
        <position position="402"/>
    </location>
    <ligand>
        <name>Zn(2+)</name>
        <dbReference type="ChEBI" id="CHEBI:29105"/>
        <label>4</label>
    </ligand>
</feature>
<feature type="binding site" evidence="1">
    <location>
        <position position="407"/>
    </location>
    <ligand>
        <name>Zn(2+)</name>
        <dbReference type="ChEBI" id="CHEBI:29105"/>
        <label>4</label>
    </ligand>
</feature>
<feature type="modified residue" description="N6-acetyllysine" evidence="2">
    <location>
        <position position="266"/>
    </location>
</feature>
<feature type="modified residue" description="Phosphoserine" evidence="24 25">
    <location>
        <position position="391"/>
    </location>
</feature>
<feature type="splice variant" id="VSP_002208" description="In isoform 2." evidence="23">
    <original>MAENLK</original>
    <variation>LKEKVAATRGKRRLSVTVTLSVSTGDAGRGGRSGTDPLLKMGEPATL</variation>
    <location>
        <begin position="1"/>
        <end position="6"/>
    </location>
</feature>
<feature type="splice variant" id="VSP_024029" description="In isoform 3." evidence="22">
    <original>IITSEEAERR</original>
    <variation>VPPGCYLLGK</variation>
    <location>
        <begin position="277"/>
        <end position="286"/>
    </location>
</feature>
<feature type="splice variant" id="VSP_024030" description="In isoform 3." evidence="22">
    <location>
        <begin position="287"/>
        <end position="412"/>
    </location>
</feature>
<feature type="mutagenesis site" description="No effect on rates of development into blastocysts." evidence="21">
    <original>HSC</original>
    <variation>LAA</variation>
    <location>
        <begin position="324"/>
        <end position="326"/>
    </location>
</feature>
<feature type="sequence conflict" description="In Ref. 3; BAC40334." evidence="23" ref="3">
    <original>D</original>
    <variation>G</variation>
    <location>
        <position position="364"/>
    </location>
</feature>